<comment type="function">
    <text evidence="1">Produces ATP from ADP in the presence of a proton gradient across the membrane. The gamma chain is believed to be important in regulating ATPase activity and the flow of protons through the CF(0) complex.</text>
</comment>
<comment type="subunit">
    <text evidence="1">F-type ATPases have 2 components, CF(1) - the catalytic core - and CF(0) - the membrane proton channel. CF(1) has five subunits: alpha(3), beta(3), gamma(1), delta(1), epsilon(1). CF(0) has three main subunits: a, b and c.</text>
</comment>
<comment type="subcellular location">
    <subcellularLocation>
        <location evidence="1">Cell inner membrane</location>
        <topology evidence="1">Peripheral membrane protein</topology>
    </subcellularLocation>
</comment>
<comment type="similarity">
    <text evidence="1">Belongs to the ATPase gamma chain family.</text>
</comment>
<accession>A5CVI7</accession>
<feature type="chain" id="PRO_1000053374" description="ATP synthase gamma chain">
    <location>
        <begin position="1"/>
        <end position="288"/>
    </location>
</feature>
<evidence type="ECO:0000255" key="1">
    <source>
        <dbReference type="HAMAP-Rule" id="MF_00815"/>
    </source>
</evidence>
<sequence>MAVGKEIRTQISSIKNTQKITSAMEMVAASKMKKAQDRMLESRPYCEKISNIIGHLAYAHSEFQHPYMNSLKKLQSIGIIIISSDRGLCGGLNTNLFRYILRQVVEYQANGIKVDICTIGKKATLFFKNFGLNVKSVLTDLGDSPHFDDLLGTIKIMLDGFDLGEIQQLSVAYNKFENTMIQIPTIMQLVPIVSIKSDNINHYWDYIYEPNAQEVLSALLVRYIEALVYQGLVENISCEQSSRMIAMKSATDNAGDMVKELELIYNKARQAAITQEISEIVSGGATAV</sequence>
<name>ATPG_VESOH</name>
<dbReference type="EMBL" id="AP009247">
    <property type="protein sequence ID" value="BAF62045.1"/>
    <property type="molecule type" value="Genomic_DNA"/>
</dbReference>
<dbReference type="RefSeq" id="WP_011930314.1">
    <property type="nucleotide sequence ID" value="NC_009465.1"/>
</dbReference>
<dbReference type="SMR" id="A5CVI7"/>
<dbReference type="STRING" id="412965.COSY_0946"/>
<dbReference type="KEGG" id="vok:COSY_0946"/>
<dbReference type="eggNOG" id="COG0224">
    <property type="taxonomic scope" value="Bacteria"/>
</dbReference>
<dbReference type="HOGENOM" id="CLU_050669_0_1_6"/>
<dbReference type="OrthoDB" id="9812769at2"/>
<dbReference type="Proteomes" id="UP000000247">
    <property type="component" value="Chromosome"/>
</dbReference>
<dbReference type="GO" id="GO:0005886">
    <property type="term" value="C:plasma membrane"/>
    <property type="evidence" value="ECO:0007669"/>
    <property type="project" value="UniProtKB-SubCell"/>
</dbReference>
<dbReference type="GO" id="GO:0045259">
    <property type="term" value="C:proton-transporting ATP synthase complex"/>
    <property type="evidence" value="ECO:0007669"/>
    <property type="project" value="UniProtKB-KW"/>
</dbReference>
<dbReference type="GO" id="GO:0005524">
    <property type="term" value="F:ATP binding"/>
    <property type="evidence" value="ECO:0007669"/>
    <property type="project" value="UniProtKB-UniRule"/>
</dbReference>
<dbReference type="GO" id="GO:0046933">
    <property type="term" value="F:proton-transporting ATP synthase activity, rotational mechanism"/>
    <property type="evidence" value="ECO:0007669"/>
    <property type="project" value="UniProtKB-UniRule"/>
</dbReference>
<dbReference type="GO" id="GO:0042777">
    <property type="term" value="P:proton motive force-driven plasma membrane ATP synthesis"/>
    <property type="evidence" value="ECO:0007669"/>
    <property type="project" value="UniProtKB-UniRule"/>
</dbReference>
<dbReference type="CDD" id="cd12151">
    <property type="entry name" value="F1-ATPase_gamma"/>
    <property type="match status" value="1"/>
</dbReference>
<dbReference type="FunFam" id="1.10.287.80:FF:000005">
    <property type="entry name" value="ATP synthase gamma chain"/>
    <property type="match status" value="1"/>
</dbReference>
<dbReference type="Gene3D" id="3.40.1380.10">
    <property type="match status" value="1"/>
</dbReference>
<dbReference type="Gene3D" id="1.10.287.80">
    <property type="entry name" value="ATP synthase, gamma subunit, helix hairpin domain"/>
    <property type="match status" value="1"/>
</dbReference>
<dbReference type="HAMAP" id="MF_00815">
    <property type="entry name" value="ATP_synth_gamma_bact"/>
    <property type="match status" value="1"/>
</dbReference>
<dbReference type="InterPro" id="IPR035968">
    <property type="entry name" value="ATP_synth_F1_ATPase_gsu"/>
</dbReference>
<dbReference type="InterPro" id="IPR000131">
    <property type="entry name" value="ATP_synth_F1_gsu"/>
</dbReference>
<dbReference type="NCBIfam" id="TIGR01146">
    <property type="entry name" value="ATPsyn_F1gamma"/>
    <property type="match status" value="1"/>
</dbReference>
<dbReference type="NCBIfam" id="NF004144">
    <property type="entry name" value="PRK05621.1-1"/>
    <property type="match status" value="1"/>
</dbReference>
<dbReference type="PANTHER" id="PTHR11693">
    <property type="entry name" value="ATP SYNTHASE GAMMA CHAIN"/>
    <property type="match status" value="1"/>
</dbReference>
<dbReference type="PANTHER" id="PTHR11693:SF22">
    <property type="entry name" value="ATP SYNTHASE SUBUNIT GAMMA, MITOCHONDRIAL"/>
    <property type="match status" value="1"/>
</dbReference>
<dbReference type="Pfam" id="PF00231">
    <property type="entry name" value="ATP-synt"/>
    <property type="match status" value="1"/>
</dbReference>
<dbReference type="PRINTS" id="PR00126">
    <property type="entry name" value="ATPASEGAMMA"/>
</dbReference>
<dbReference type="SUPFAM" id="SSF52943">
    <property type="entry name" value="ATP synthase (F1-ATPase), gamma subunit"/>
    <property type="match status" value="1"/>
</dbReference>
<reference key="1">
    <citation type="journal article" date="2007" name="Curr. Biol.">
        <title>Reduced genome of the thioautotrophic intracellular symbiont in a deep-sea clam, Calyptogena okutanii.</title>
        <authorList>
            <person name="Kuwahara H."/>
            <person name="Yoshida T."/>
            <person name="Takaki Y."/>
            <person name="Shimamura S."/>
            <person name="Nishi S."/>
            <person name="Harada M."/>
            <person name="Matsuyama K."/>
            <person name="Takishita K."/>
            <person name="Kawato M."/>
            <person name="Uematsu K."/>
            <person name="Fujiwara Y."/>
            <person name="Sato T."/>
            <person name="Kato C."/>
            <person name="Kitagawa M."/>
            <person name="Kato I."/>
            <person name="Maruyama T."/>
        </authorList>
    </citation>
    <scope>NUCLEOTIDE SEQUENCE [LARGE SCALE GENOMIC DNA]</scope>
    <source>
        <strain>HA</strain>
    </source>
</reference>
<proteinExistence type="inferred from homology"/>
<organism>
    <name type="scientific">Vesicomyosocius okutanii subsp. Calyptogena okutanii (strain HA)</name>
    <dbReference type="NCBI Taxonomy" id="412965"/>
    <lineage>
        <taxon>Bacteria</taxon>
        <taxon>Pseudomonadati</taxon>
        <taxon>Pseudomonadota</taxon>
        <taxon>Gammaproteobacteria</taxon>
        <taxon>Candidatus Pseudothioglobaceae</taxon>
        <taxon>Candidatus Vesicomyosocius</taxon>
    </lineage>
</organism>
<protein>
    <recommendedName>
        <fullName evidence="1">ATP synthase gamma chain</fullName>
    </recommendedName>
    <alternativeName>
        <fullName evidence="1">ATP synthase F1 sector gamma subunit</fullName>
    </alternativeName>
    <alternativeName>
        <fullName evidence="1">F-ATPase gamma subunit</fullName>
    </alternativeName>
</protein>
<gene>
    <name evidence="1" type="primary">atpG</name>
    <name type="ordered locus">COSY_0946</name>
</gene>
<keyword id="KW-0066">ATP synthesis</keyword>
<keyword id="KW-0997">Cell inner membrane</keyword>
<keyword id="KW-1003">Cell membrane</keyword>
<keyword id="KW-0139">CF(1)</keyword>
<keyword id="KW-0375">Hydrogen ion transport</keyword>
<keyword id="KW-0406">Ion transport</keyword>
<keyword id="KW-0472">Membrane</keyword>
<keyword id="KW-1185">Reference proteome</keyword>
<keyword id="KW-0813">Transport</keyword>